<name>DER_DESAP</name>
<keyword id="KW-0342">GTP-binding</keyword>
<keyword id="KW-0547">Nucleotide-binding</keyword>
<keyword id="KW-1185">Reference proteome</keyword>
<keyword id="KW-0677">Repeat</keyword>
<keyword id="KW-0690">Ribosome biogenesis</keyword>
<organism>
    <name type="scientific">Desulforudis audaxviator (strain MP104C)</name>
    <dbReference type="NCBI Taxonomy" id="477974"/>
    <lineage>
        <taxon>Bacteria</taxon>
        <taxon>Bacillati</taxon>
        <taxon>Bacillota</taxon>
        <taxon>Clostridia</taxon>
        <taxon>Thermoanaerobacterales</taxon>
        <taxon>Candidatus Desulforudaceae</taxon>
        <taxon>Candidatus Desulforudis</taxon>
    </lineage>
</organism>
<comment type="function">
    <text evidence="1">GTPase that plays an essential role in the late steps of ribosome biogenesis.</text>
</comment>
<comment type="subunit">
    <text evidence="1">Associates with the 50S ribosomal subunit.</text>
</comment>
<comment type="similarity">
    <text evidence="1">Belongs to the TRAFAC class TrmE-Era-EngA-EngB-Septin-like GTPase superfamily. EngA (Der) GTPase family.</text>
</comment>
<reference key="1">
    <citation type="submission" date="2007-10" db="EMBL/GenBank/DDBJ databases">
        <title>Complete sequence of chromosome of Desulforudis audaxviator MP104C.</title>
        <authorList>
            <person name="Copeland A."/>
            <person name="Lucas S."/>
            <person name="Lapidus A."/>
            <person name="Barry K."/>
            <person name="Glavina del Rio T."/>
            <person name="Dalin E."/>
            <person name="Tice H."/>
            <person name="Bruce D."/>
            <person name="Pitluck S."/>
            <person name="Lowry S.R."/>
            <person name="Larimer F."/>
            <person name="Land M.L."/>
            <person name="Hauser L."/>
            <person name="Kyrpides N."/>
            <person name="Ivanova N.N."/>
            <person name="Richardson P."/>
        </authorList>
    </citation>
    <scope>NUCLEOTIDE SEQUENCE [LARGE SCALE GENOMIC DNA]</scope>
    <source>
        <strain>MP104C</strain>
    </source>
</reference>
<sequence>MTKPVVAIVGRPNVGKSTLFNRILGRQAAVVDAEPGVTRDRLYQEVDWAGRHFILVDTGGIESQAGEDMANRVFDQVRRAMAEAQLILYVLDGNAGLLEEDVQVAALLRRSSKPVLVVVNKVDDFSRPLPLADFYRLGLGEPVPVSAAQGLNIGDLLDLVVAGMPAGADEPRSEPVRIAVVGRPNVGKSSLVNAILGEERVIVSDVPGTTRDAVDTLFRRDGREYVFIDTAGMRRKARIRESIEYYSVLRAKKALERSDLALVVLDFTDGVTNQDQRIAGLAEEAGKGTIIVVNKWDLAEGSGVSASRYQEEVRRELIFIGYAPVLCVSAVSGLGVPKILDTVESVMGEYRRQIPTSMLNRILQDAFMISPPPARKGKRLKLMYCTQVATGPPAFLLFVNDPGLVSPGYRRYLENEVRRALGFKGVPVRILFRRRESK</sequence>
<proteinExistence type="inferred from homology"/>
<accession>B1I462</accession>
<gene>
    <name evidence="1" type="primary">der</name>
    <name type="synonym">engA</name>
    <name type="ordered locus">Daud_1172</name>
</gene>
<feature type="chain" id="PRO_1000099116" description="GTPase Der">
    <location>
        <begin position="1"/>
        <end position="438"/>
    </location>
</feature>
<feature type="domain" description="EngA-type G 1">
    <location>
        <begin position="4"/>
        <end position="168"/>
    </location>
</feature>
<feature type="domain" description="EngA-type G 2">
    <location>
        <begin position="176"/>
        <end position="351"/>
    </location>
</feature>
<feature type="domain" description="KH-like" evidence="1">
    <location>
        <begin position="352"/>
        <end position="436"/>
    </location>
</feature>
<feature type="binding site" evidence="1">
    <location>
        <begin position="10"/>
        <end position="17"/>
    </location>
    <ligand>
        <name>GTP</name>
        <dbReference type="ChEBI" id="CHEBI:37565"/>
        <label>1</label>
    </ligand>
</feature>
<feature type="binding site" evidence="1">
    <location>
        <begin position="57"/>
        <end position="61"/>
    </location>
    <ligand>
        <name>GTP</name>
        <dbReference type="ChEBI" id="CHEBI:37565"/>
        <label>1</label>
    </ligand>
</feature>
<feature type="binding site" evidence="1">
    <location>
        <begin position="120"/>
        <end position="123"/>
    </location>
    <ligand>
        <name>GTP</name>
        <dbReference type="ChEBI" id="CHEBI:37565"/>
        <label>1</label>
    </ligand>
</feature>
<feature type="binding site" evidence="1">
    <location>
        <begin position="182"/>
        <end position="189"/>
    </location>
    <ligand>
        <name>GTP</name>
        <dbReference type="ChEBI" id="CHEBI:37565"/>
        <label>2</label>
    </ligand>
</feature>
<feature type="binding site" evidence="1">
    <location>
        <begin position="229"/>
        <end position="233"/>
    </location>
    <ligand>
        <name>GTP</name>
        <dbReference type="ChEBI" id="CHEBI:37565"/>
        <label>2</label>
    </ligand>
</feature>
<feature type="binding site" evidence="1">
    <location>
        <begin position="294"/>
        <end position="297"/>
    </location>
    <ligand>
        <name>GTP</name>
        <dbReference type="ChEBI" id="CHEBI:37565"/>
        <label>2</label>
    </ligand>
</feature>
<evidence type="ECO:0000255" key="1">
    <source>
        <dbReference type="HAMAP-Rule" id="MF_00195"/>
    </source>
</evidence>
<dbReference type="EMBL" id="CP000860">
    <property type="protein sequence ID" value="ACA59683.1"/>
    <property type="molecule type" value="Genomic_DNA"/>
</dbReference>
<dbReference type="RefSeq" id="WP_012302269.1">
    <property type="nucleotide sequence ID" value="NC_010424.1"/>
</dbReference>
<dbReference type="SMR" id="B1I462"/>
<dbReference type="STRING" id="477974.Daud_1172"/>
<dbReference type="KEGG" id="dau:Daud_1172"/>
<dbReference type="eggNOG" id="COG1160">
    <property type="taxonomic scope" value="Bacteria"/>
</dbReference>
<dbReference type="HOGENOM" id="CLU_016077_6_2_9"/>
<dbReference type="OrthoDB" id="9805918at2"/>
<dbReference type="Proteomes" id="UP000008544">
    <property type="component" value="Chromosome"/>
</dbReference>
<dbReference type="GO" id="GO:0016887">
    <property type="term" value="F:ATP hydrolysis activity"/>
    <property type="evidence" value="ECO:0007669"/>
    <property type="project" value="InterPro"/>
</dbReference>
<dbReference type="GO" id="GO:0005525">
    <property type="term" value="F:GTP binding"/>
    <property type="evidence" value="ECO:0007669"/>
    <property type="project" value="UniProtKB-UniRule"/>
</dbReference>
<dbReference type="GO" id="GO:0043022">
    <property type="term" value="F:ribosome binding"/>
    <property type="evidence" value="ECO:0007669"/>
    <property type="project" value="TreeGrafter"/>
</dbReference>
<dbReference type="GO" id="GO:0042254">
    <property type="term" value="P:ribosome biogenesis"/>
    <property type="evidence" value="ECO:0007669"/>
    <property type="project" value="UniProtKB-KW"/>
</dbReference>
<dbReference type="CDD" id="cd01894">
    <property type="entry name" value="EngA1"/>
    <property type="match status" value="1"/>
</dbReference>
<dbReference type="CDD" id="cd01895">
    <property type="entry name" value="EngA2"/>
    <property type="match status" value="1"/>
</dbReference>
<dbReference type="FunFam" id="3.30.300.20:FF:000004">
    <property type="entry name" value="GTPase Der"/>
    <property type="match status" value="1"/>
</dbReference>
<dbReference type="FunFam" id="3.40.50.300:FF:000040">
    <property type="entry name" value="GTPase Der"/>
    <property type="match status" value="1"/>
</dbReference>
<dbReference type="FunFam" id="3.40.50.300:FF:000057">
    <property type="entry name" value="GTPase Der"/>
    <property type="match status" value="1"/>
</dbReference>
<dbReference type="Gene3D" id="3.30.300.20">
    <property type="match status" value="1"/>
</dbReference>
<dbReference type="Gene3D" id="3.40.50.300">
    <property type="entry name" value="P-loop containing nucleotide triphosphate hydrolases"/>
    <property type="match status" value="2"/>
</dbReference>
<dbReference type="HAMAP" id="MF_00195">
    <property type="entry name" value="GTPase_Der"/>
    <property type="match status" value="1"/>
</dbReference>
<dbReference type="InterPro" id="IPR003593">
    <property type="entry name" value="AAA+_ATPase"/>
</dbReference>
<dbReference type="InterPro" id="IPR031166">
    <property type="entry name" value="G_ENGA"/>
</dbReference>
<dbReference type="InterPro" id="IPR006073">
    <property type="entry name" value="GTP-bd"/>
</dbReference>
<dbReference type="InterPro" id="IPR016484">
    <property type="entry name" value="GTPase_Der"/>
</dbReference>
<dbReference type="InterPro" id="IPR032859">
    <property type="entry name" value="KH_dom-like"/>
</dbReference>
<dbReference type="InterPro" id="IPR015946">
    <property type="entry name" value="KH_dom-like_a/b"/>
</dbReference>
<dbReference type="InterPro" id="IPR027417">
    <property type="entry name" value="P-loop_NTPase"/>
</dbReference>
<dbReference type="InterPro" id="IPR005225">
    <property type="entry name" value="Small_GTP-bd"/>
</dbReference>
<dbReference type="NCBIfam" id="TIGR03594">
    <property type="entry name" value="GTPase_EngA"/>
    <property type="match status" value="1"/>
</dbReference>
<dbReference type="NCBIfam" id="TIGR00231">
    <property type="entry name" value="small_GTP"/>
    <property type="match status" value="2"/>
</dbReference>
<dbReference type="PANTHER" id="PTHR43834">
    <property type="entry name" value="GTPASE DER"/>
    <property type="match status" value="1"/>
</dbReference>
<dbReference type="PANTHER" id="PTHR43834:SF6">
    <property type="entry name" value="GTPASE DER"/>
    <property type="match status" value="1"/>
</dbReference>
<dbReference type="Pfam" id="PF14714">
    <property type="entry name" value="KH_dom-like"/>
    <property type="match status" value="1"/>
</dbReference>
<dbReference type="Pfam" id="PF01926">
    <property type="entry name" value="MMR_HSR1"/>
    <property type="match status" value="2"/>
</dbReference>
<dbReference type="PIRSF" id="PIRSF006485">
    <property type="entry name" value="GTP-binding_EngA"/>
    <property type="match status" value="1"/>
</dbReference>
<dbReference type="PRINTS" id="PR00326">
    <property type="entry name" value="GTP1OBG"/>
</dbReference>
<dbReference type="SMART" id="SM00382">
    <property type="entry name" value="AAA"/>
    <property type="match status" value="2"/>
</dbReference>
<dbReference type="SUPFAM" id="SSF52540">
    <property type="entry name" value="P-loop containing nucleoside triphosphate hydrolases"/>
    <property type="match status" value="2"/>
</dbReference>
<dbReference type="PROSITE" id="PS51712">
    <property type="entry name" value="G_ENGA"/>
    <property type="match status" value="2"/>
</dbReference>
<protein>
    <recommendedName>
        <fullName evidence="1">GTPase Der</fullName>
    </recommendedName>
    <alternativeName>
        <fullName evidence="1">GTP-binding protein EngA</fullName>
    </alternativeName>
</protein>